<evidence type="ECO:0000255" key="1">
    <source>
        <dbReference type="HAMAP-Rule" id="MF_01390"/>
    </source>
</evidence>
<keyword id="KW-0150">Chloroplast</keyword>
<keyword id="KW-0507">mRNA processing</keyword>
<keyword id="KW-0934">Plastid</keyword>
<keyword id="KW-0694">RNA-binding</keyword>
<keyword id="KW-0819">tRNA processing</keyword>
<protein>
    <recommendedName>
        <fullName evidence="1">Maturase K</fullName>
    </recommendedName>
    <alternativeName>
        <fullName evidence="1">Intron maturase</fullName>
    </alternativeName>
</protein>
<dbReference type="EMBL" id="AJ307041">
    <property type="protein sequence ID" value="CAC39308.1"/>
    <property type="molecule type" value="Genomic_DNA"/>
</dbReference>
<dbReference type="GO" id="GO:0009507">
    <property type="term" value="C:chloroplast"/>
    <property type="evidence" value="ECO:0007669"/>
    <property type="project" value="UniProtKB-SubCell"/>
</dbReference>
<dbReference type="GO" id="GO:0003723">
    <property type="term" value="F:RNA binding"/>
    <property type="evidence" value="ECO:0007669"/>
    <property type="project" value="UniProtKB-KW"/>
</dbReference>
<dbReference type="GO" id="GO:0006397">
    <property type="term" value="P:mRNA processing"/>
    <property type="evidence" value="ECO:0007669"/>
    <property type="project" value="UniProtKB-KW"/>
</dbReference>
<dbReference type="GO" id="GO:0008380">
    <property type="term" value="P:RNA splicing"/>
    <property type="evidence" value="ECO:0007669"/>
    <property type="project" value="UniProtKB-UniRule"/>
</dbReference>
<dbReference type="GO" id="GO:0008033">
    <property type="term" value="P:tRNA processing"/>
    <property type="evidence" value="ECO:0007669"/>
    <property type="project" value="UniProtKB-KW"/>
</dbReference>
<dbReference type="HAMAP" id="MF_01390">
    <property type="entry name" value="MatK"/>
    <property type="match status" value="1"/>
</dbReference>
<dbReference type="InterPro" id="IPR024937">
    <property type="entry name" value="Domain_X"/>
</dbReference>
<dbReference type="InterPro" id="IPR002866">
    <property type="entry name" value="Maturase_MatK"/>
</dbReference>
<dbReference type="InterPro" id="IPR024942">
    <property type="entry name" value="Maturase_MatK_N"/>
</dbReference>
<dbReference type="PANTHER" id="PTHR34811">
    <property type="entry name" value="MATURASE K"/>
    <property type="match status" value="1"/>
</dbReference>
<dbReference type="PANTHER" id="PTHR34811:SF1">
    <property type="entry name" value="MATURASE K"/>
    <property type="match status" value="1"/>
</dbReference>
<dbReference type="Pfam" id="PF01348">
    <property type="entry name" value="Intron_maturas2"/>
    <property type="match status" value="1"/>
</dbReference>
<dbReference type="Pfam" id="PF01824">
    <property type="entry name" value="MatK_N"/>
    <property type="match status" value="1"/>
</dbReference>
<accession>Q95G88</accession>
<proteinExistence type="inferred from homology"/>
<reference key="1">
    <citation type="submission" date="2001-05" db="EMBL/GenBank/DDBJ databases">
        <title>Evolutionary aspects of Jurinea cyanoides (L.) RCHB.</title>
        <authorList>
            <person name="Peterson A."/>
            <person name="Peterson J."/>
        </authorList>
    </citation>
    <scope>NUCLEOTIDE SEQUENCE [GENOMIC DNA]</scope>
</reference>
<organism>
    <name type="scientific">Jurinea cyanoides</name>
    <dbReference type="NCBI Taxonomy" id="127018"/>
    <lineage>
        <taxon>Eukaryota</taxon>
        <taxon>Viridiplantae</taxon>
        <taxon>Streptophyta</taxon>
        <taxon>Embryophyta</taxon>
        <taxon>Tracheophyta</taxon>
        <taxon>Spermatophyta</taxon>
        <taxon>Magnoliopsida</taxon>
        <taxon>eudicotyledons</taxon>
        <taxon>Gunneridae</taxon>
        <taxon>Pentapetalae</taxon>
        <taxon>asterids</taxon>
        <taxon>campanulids</taxon>
        <taxon>Asterales</taxon>
        <taxon>Asteraceae</taxon>
        <taxon>Carduoideae</taxon>
        <taxon>Cardueae</taxon>
        <taxon>Saussureinae</taxon>
        <taxon>Jurinea</taxon>
    </lineage>
</organism>
<feature type="chain" id="PRO_0000143443" description="Maturase K">
    <location>
        <begin position="1"/>
        <end position="506"/>
    </location>
</feature>
<gene>
    <name evidence="1" type="primary">matK</name>
</gene>
<sequence length="506" mass="59613">MDKFQSYLGLDRSQQHYFLYPLIFQEYIYVLAHDHGLNRSILLENAGYDNKSSLLIVKRLITRMYQQNHLILSVNDSKQTPFLGHNKNFYLQVMSEVSSIIMEIPLSLRLISSLEKKGVVKSDNLRSIHSIFSFLEDNFLHLNYVLDIPIPYPAHLEILVQALRYWIKDASSLHLLRFFLHECHNWDSLITSNSKKASSSFSKRNHRLFFFLYTSHVCEYESGFIFLRNQSSHLRSTSSGALLERIYFYGKLEHLAEVFARAFQANLWLFKDPFMHYVRYQGKSILASKGTFLLMNKWKYYFVNFWKSYFYLWSEPGRIYINQLSNHSLDFLGYRSSVRLKPSMVRSQMLENAFLINNAIKKFDTIVPIMPLIGSLAKSKFCNTLGHPIGKVIWANLSDSDIIDRFGRIYRNLSHYHSGSSKKKSLYRVKYILRLSCARTLARKHKSTVRAFLKRFGSELLEEFFTEEEQVFSLTFPKVSSISRRLSRRRIWYLDIICINDLANHE</sequence>
<comment type="function">
    <text evidence="1">Usually encoded in the trnK tRNA gene intron. Probably assists in splicing its own and other chloroplast group II introns.</text>
</comment>
<comment type="subcellular location">
    <subcellularLocation>
        <location>Plastid</location>
        <location>Chloroplast</location>
    </subcellularLocation>
</comment>
<comment type="similarity">
    <text evidence="1">Belongs to the intron maturase 2 family. MatK subfamily.</text>
</comment>
<geneLocation type="chloroplast"/>
<name>MATK_JURCY</name>